<evidence type="ECO:0000255" key="1">
    <source>
        <dbReference type="HAMAP-Rule" id="MF_01227"/>
    </source>
</evidence>
<gene>
    <name evidence="1" type="primary">pyrG</name>
    <name type="ordered locus">Gmet_1276</name>
</gene>
<name>PYRG_GEOMG</name>
<feature type="chain" id="PRO_0000266125" description="CTP synthase">
    <location>
        <begin position="1"/>
        <end position="538"/>
    </location>
</feature>
<feature type="domain" description="Glutamine amidotransferase type-1" evidence="1">
    <location>
        <begin position="292"/>
        <end position="534"/>
    </location>
</feature>
<feature type="region of interest" description="Amidoligase domain" evidence="1">
    <location>
        <begin position="1"/>
        <end position="266"/>
    </location>
</feature>
<feature type="active site" description="Nucleophile; for glutamine hydrolysis" evidence="1">
    <location>
        <position position="381"/>
    </location>
</feature>
<feature type="active site" evidence="1">
    <location>
        <position position="507"/>
    </location>
</feature>
<feature type="active site" evidence="1">
    <location>
        <position position="509"/>
    </location>
</feature>
<feature type="binding site" evidence="1">
    <location>
        <position position="14"/>
    </location>
    <ligand>
        <name>CTP</name>
        <dbReference type="ChEBI" id="CHEBI:37563"/>
        <note>allosteric inhibitor</note>
    </ligand>
</feature>
<feature type="binding site" evidence="1">
    <location>
        <position position="14"/>
    </location>
    <ligand>
        <name>UTP</name>
        <dbReference type="ChEBI" id="CHEBI:46398"/>
    </ligand>
</feature>
<feature type="binding site" evidence="1">
    <location>
        <begin position="15"/>
        <end position="20"/>
    </location>
    <ligand>
        <name>ATP</name>
        <dbReference type="ChEBI" id="CHEBI:30616"/>
    </ligand>
</feature>
<feature type="binding site" evidence="1">
    <location>
        <position position="72"/>
    </location>
    <ligand>
        <name>ATP</name>
        <dbReference type="ChEBI" id="CHEBI:30616"/>
    </ligand>
</feature>
<feature type="binding site" evidence="1">
    <location>
        <position position="72"/>
    </location>
    <ligand>
        <name>Mg(2+)</name>
        <dbReference type="ChEBI" id="CHEBI:18420"/>
    </ligand>
</feature>
<feature type="binding site" evidence="1">
    <location>
        <position position="140"/>
    </location>
    <ligand>
        <name>Mg(2+)</name>
        <dbReference type="ChEBI" id="CHEBI:18420"/>
    </ligand>
</feature>
<feature type="binding site" evidence="1">
    <location>
        <begin position="147"/>
        <end position="149"/>
    </location>
    <ligand>
        <name>CTP</name>
        <dbReference type="ChEBI" id="CHEBI:37563"/>
        <note>allosteric inhibitor</note>
    </ligand>
</feature>
<feature type="binding site" evidence="1">
    <location>
        <begin position="187"/>
        <end position="192"/>
    </location>
    <ligand>
        <name>CTP</name>
        <dbReference type="ChEBI" id="CHEBI:37563"/>
        <note>allosteric inhibitor</note>
    </ligand>
</feature>
<feature type="binding site" evidence="1">
    <location>
        <begin position="187"/>
        <end position="192"/>
    </location>
    <ligand>
        <name>UTP</name>
        <dbReference type="ChEBI" id="CHEBI:46398"/>
    </ligand>
</feature>
<feature type="binding site" evidence="1">
    <location>
        <position position="223"/>
    </location>
    <ligand>
        <name>CTP</name>
        <dbReference type="ChEBI" id="CHEBI:37563"/>
        <note>allosteric inhibitor</note>
    </ligand>
</feature>
<feature type="binding site" evidence="1">
    <location>
        <position position="223"/>
    </location>
    <ligand>
        <name>UTP</name>
        <dbReference type="ChEBI" id="CHEBI:46398"/>
    </ligand>
</feature>
<feature type="binding site" evidence="1">
    <location>
        <position position="354"/>
    </location>
    <ligand>
        <name>L-glutamine</name>
        <dbReference type="ChEBI" id="CHEBI:58359"/>
    </ligand>
</feature>
<feature type="binding site" evidence="1">
    <location>
        <begin position="382"/>
        <end position="385"/>
    </location>
    <ligand>
        <name>L-glutamine</name>
        <dbReference type="ChEBI" id="CHEBI:58359"/>
    </ligand>
</feature>
<feature type="binding site" evidence="1">
    <location>
        <position position="405"/>
    </location>
    <ligand>
        <name>L-glutamine</name>
        <dbReference type="ChEBI" id="CHEBI:58359"/>
    </ligand>
</feature>
<feature type="binding site" evidence="1">
    <location>
        <position position="462"/>
    </location>
    <ligand>
        <name>L-glutamine</name>
        <dbReference type="ChEBI" id="CHEBI:58359"/>
    </ligand>
</feature>
<comment type="function">
    <text evidence="1">Catalyzes the ATP-dependent amination of UTP to CTP with either L-glutamine or ammonia as the source of nitrogen. Regulates intracellular CTP levels through interactions with the four ribonucleotide triphosphates.</text>
</comment>
<comment type="catalytic activity">
    <reaction evidence="1">
        <text>UTP + L-glutamine + ATP + H2O = CTP + L-glutamate + ADP + phosphate + 2 H(+)</text>
        <dbReference type="Rhea" id="RHEA:26426"/>
        <dbReference type="ChEBI" id="CHEBI:15377"/>
        <dbReference type="ChEBI" id="CHEBI:15378"/>
        <dbReference type="ChEBI" id="CHEBI:29985"/>
        <dbReference type="ChEBI" id="CHEBI:30616"/>
        <dbReference type="ChEBI" id="CHEBI:37563"/>
        <dbReference type="ChEBI" id="CHEBI:43474"/>
        <dbReference type="ChEBI" id="CHEBI:46398"/>
        <dbReference type="ChEBI" id="CHEBI:58359"/>
        <dbReference type="ChEBI" id="CHEBI:456216"/>
        <dbReference type="EC" id="6.3.4.2"/>
    </reaction>
</comment>
<comment type="catalytic activity">
    <reaction evidence="1">
        <text>L-glutamine + H2O = L-glutamate + NH4(+)</text>
        <dbReference type="Rhea" id="RHEA:15889"/>
        <dbReference type="ChEBI" id="CHEBI:15377"/>
        <dbReference type="ChEBI" id="CHEBI:28938"/>
        <dbReference type="ChEBI" id="CHEBI:29985"/>
        <dbReference type="ChEBI" id="CHEBI:58359"/>
    </reaction>
</comment>
<comment type="catalytic activity">
    <reaction evidence="1">
        <text>UTP + NH4(+) + ATP = CTP + ADP + phosphate + 2 H(+)</text>
        <dbReference type="Rhea" id="RHEA:16597"/>
        <dbReference type="ChEBI" id="CHEBI:15378"/>
        <dbReference type="ChEBI" id="CHEBI:28938"/>
        <dbReference type="ChEBI" id="CHEBI:30616"/>
        <dbReference type="ChEBI" id="CHEBI:37563"/>
        <dbReference type="ChEBI" id="CHEBI:43474"/>
        <dbReference type="ChEBI" id="CHEBI:46398"/>
        <dbReference type="ChEBI" id="CHEBI:456216"/>
    </reaction>
</comment>
<comment type="activity regulation">
    <text evidence="1">Allosterically activated by GTP, when glutamine is the substrate; GTP has no effect on the reaction when ammonia is the substrate. The allosteric effector GTP functions by stabilizing the protein conformation that binds the tetrahedral intermediate(s) formed during glutamine hydrolysis. Inhibited by the product CTP, via allosteric rather than competitive inhibition.</text>
</comment>
<comment type="pathway">
    <text evidence="1">Pyrimidine metabolism; CTP biosynthesis via de novo pathway; CTP from UDP: step 2/2.</text>
</comment>
<comment type="subunit">
    <text evidence="1">Homotetramer.</text>
</comment>
<comment type="miscellaneous">
    <text evidence="1">CTPSs have evolved a hybrid strategy for distinguishing between UTP and CTP. The overlapping regions of the product feedback inhibitory and substrate sites recognize a common feature in both compounds, the triphosphate moiety. To differentiate isosteric substrate and product pyrimidine rings, an additional pocket far from the expected kinase/ligase catalytic site, specifically recognizes the cytosine and ribose portions of the product inhibitor.</text>
</comment>
<comment type="similarity">
    <text evidence="1">Belongs to the CTP synthase family.</text>
</comment>
<sequence length="538" mass="59477">MKTKFIFVTGGVVSSIGKGLASASLGALLEARGLRVSMQKLDPYINVDPGTMSPFQHGEVFVTDDGAETDLDLGHYERYTSARLSKRSNFTTGQVYFSVIEKERRGDYLGGTVQVIPHITDEIKHKILENAKGADVAIVEVGGTVGDIESLPFLEAIRQFKADRGAGNVLYLHVTLVPYIKTAGELKTKPTQHSVKELREIGIQPDILICRCEKDLPHDMKAKIALFCNVEEKGVITSADAEHIYAVPLALHKQGLDDQVVDKLNIWTKAPDLAPWESVVEKLRNPLKGEVHIAIVGKYVNLTESYKSLAEALTHGGIANDCRVYLRYLDSEKLESEGLGGLLDDVDAILVPGGFGERGTEGKIKAIEYARTRKVPFFGICLGMQMAVVEYARNVCGLDNAFSSEFRPDCANPVIHLMEEQKGVERKGGTMRLGAYPCSLSKGTFAHRAYGSLDVSERHRHRYEFNNAFREILVSKGLVISGIYKEGDLVEIVEVADHPWFLGCQFHPEFKSKPLNPHPLFRTFIAAALEHRGKRSQA</sequence>
<keyword id="KW-0067">ATP-binding</keyword>
<keyword id="KW-0315">Glutamine amidotransferase</keyword>
<keyword id="KW-0436">Ligase</keyword>
<keyword id="KW-0460">Magnesium</keyword>
<keyword id="KW-0479">Metal-binding</keyword>
<keyword id="KW-0547">Nucleotide-binding</keyword>
<keyword id="KW-0665">Pyrimidine biosynthesis</keyword>
<keyword id="KW-1185">Reference proteome</keyword>
<proteinExistence type="inferred from homology"/>
<dbReference type="EC" id="6.3.4.2" evidence="1"/>
<dbReference type="EMBL" id="CP000148">
    <property type="protein sequence ID" value="ABB31512.1"/>
    <property type="molecule type" value="Genomic_DNA"/>
</dbReference>
<dbReference type="RefSeq" id="WP_004512091.1">
    <property type="nucleotide sequence ID" value="NC_007517.1"/>
</dbReference>
<dbReference type="SMR" id="Q39W62"/>
<dbReference type="STRING" id="269799.Gmet_1276"/>
<dbReference type="KEGG" id="gme:Gmet_1276"/>
<dbReference type="eggNOG" id="COG0504">
    <property type="taxonomic scope" value="Bacteria"/>
</dbReference>
<dbReference type="HOGENOM" id="CLU_011675_5_0_7"/>
<dbReference type="UniPathway" id="UPA00159">
    <property type="reaction ID" value="UER00277"/>
</dbReference>
<dbReference type="Proteomes" id="UP000007073">
    <property type="component" value="Chromosome"/>
</dbReference>
<dbReference type="GO" id="GO:0005829">
    <property type="term" value="C:cytosol"/>
    <property type="evidence" value="ECO:0007669"/>
    <property type="project" value="TreeGrafter"/>
</dbReference>
<dbReference type="GO" id="GO:0005524">
    <property type="term" value="F:ATP binding"/>
    <property type="evidence" value="ECO:0007669"/>
    <property type="project" value="UniProtKB-KW"/>
</dbReference>
<dbReference type="GO" id="GO:0003883">
    <property type="term" value="F:CTP synthase activity"/>
    <property type="evidence" value="ECO:0007669"/>
    <property type="project" value="UniProtKB-UniRule"/>
</dbReference>
<dbReference type="GO" id="GO:0004359">
    <property type="term" value="F:glutaminase activity"/>
    <property type="evidence" value="ECO:0007669"/>
    <property type="project" value="RHEA"/>
</dbReference>
<dbReference type="GO" id="GO:0042802">
    <property type="term" value="F:identical protein binding"/>
    <property type="evidence" value="ECO:0007669"/>
    <property type="project" value="TreeGrafter"/>
</dbReference>
<dbReference type="GO" id="GO:0046872">
    <property type="term" value="F:metal ion binding"/>
    <property type="evidence" value="ECO:0007669"/>
    <property type="project" value="UniProtKB-KW"/>
</dbReference>
<dbReference type="GO" id="GO:0044210">
    <property type="term" value="P:'de novo' CTP biosynthetic process"/>
    <property type="evidence" value="ECO:0007669"/>
    <property type="project" value="UniProtKB-UniRule"/>
</dbReference>
<dbReference type="GO" id="GO:0019856">
    <property type="term" value="P:pyrimidine nucleobase biosynthetic process"/>
    <property type="evidence" value="ECO:0007669"/>
    <property type="project" value="TreeGrafter"/>
</dbReference>
<dbReference type="CDD" id="cd03113">
    <property type="entry name" value="CTPS_N"/>
    <property type="match status" value="1"/>
</dbReference>
<dbReference type="CDD" id="cd01746">
    <property type="entry name" value="GATase1_CTP_Synthase"/>
    <property type="match status" value="1"/>
</dbReference>
<dbReference type="FunFam" id="3.40.50.300:FF:000009">
    <property type="entry name" value="CTP synthase"/>
    <property type="match status" value="1"/>
</dbReference>
<dbReference type="FunFam" id="3.40.50.880:FF:000002">
    <property type="entry name" value="CTP synthase"/>
    <property type="match status" value="1"/>
</dbReference>
<dbReference type="Gene3D" id="3.40.50.880">
    <property type="match status" value="1"/>
</dbReference>
<dbReference type="Gene3D" id="3.40.50.300">
    <property type="entry name" value="P-loop containing nucleotide triphosphate hydrolases"/>
    <property type="match status" value="1"/>
</dbReference>
<dbReference type="HAMAP" id="MF_01227">
    <property type="entry name" value="PyrG"/>
    <property type="match status" value="1"/>
</dbReference>
<dbReference type="InterPro" id="IPR029062">
    <property type="entry name" value="Class_I_gatase-like"/>
</dbReference>
<dbReference type="InterPro" id="IPR004468">
    <property type="entry name" value="CTP_synthase"/>
</dbReference>
<dbReference type="InterPro" id="IPR017456">
    <property type="entry name" value="CTP_synthase_N"/>
</dbReference>
<dbReference type="InterPro" id="IPR017926">
    <property type="entry name" value="GATASE"/>
</dbReference>
<dbReference type="InterPro" id="IPR033828">
    <property type="entry name" value="GATase1_CTP_Synthase"/>
</dbReference>
<dbReference type="InterPro" id="IPR027417">
    <property type="entry name" value="P-loop_NTPase"/>
</dbReference>
<dbReference type="NCBIfam" id="NF003792">
    <property type="entry name" value="PRK05380.1"/>
    <property type="match status" value="1"/>
</dbReference>
<dbReference type="NCBIfam" id="TIGR00337">
    <property type="entry name" value="PyrG"/>
    <property type="match status" value="1"/>
</dbReference>
<dbReference type="PANTHER" id="PTHR11550">
    <property type="entry name" value="CTP SYNTHASE"/>
    <property type="match status" value="1"/>
</dbReference>
<dbReference type="PANTHER" id="PTHR11550:SF0">
    <property type="entry name" value="CTP SYNTHASE-RELATED"/>
    <property type="match status" value="1"/>
</dbReference>
<dbReference type="Pfam" id="PF06418">
    <property type="entry name" value="CTP_synth_N"/>
    <property type="match status" value="1"/>
</dbReference>
<dbReference type="Pfam" id="PF00117">
    <property type="entry name" value="GATase"/>
    <property type="match status" value="1"/>
</dbReference>
<dbReference type="SUPFAM" id="SSF52317">
    <property type="entry name" value="Class I glutamine amidotransferase-like"/>
    <property type="match status" value="1"/>
</dbReference>
<dbReference type="SUPFAM" id="SSF52540">
    <property type="entry name" value="P-loop containing nucleoside triphosphate hydrolases"/>
    <property type="match status" value="1"/>
</dbReference>
<dbReference type="PROSITE" id="PS51273">
    <property type="entry name" value="GATASE_TYPE_1"/>
    <property type="match status" value="1"/>
</dbReference>
<protein>
    <recommendedName>
        <fullName evidence="1">CTP synthase</fullName>
        <ecNumber evidence="1">6.3.4.2</ecNumber>
    </recommendedName>
    <alternativeName>
        <fullName evidence="1">Cytidine 5'-triphosphate synthase</fullName>
    </alternativeName>
    <alternativeName>
        <fullName evidence="1">Cytidine triphosphate synthetase</fullName>
        <shortName evidence="1">CTP synthetase</shortName>
        <shortName evidence="1">CTPS</shortName>
    </alternativeName>
    <alternativeName>
        <fullName evidence="1">UTP--ammonia ligase</fullName>
    </alternativeName>
</protein>
<organism>
    <name type="scientific">Geobacter metallireducens (strain ATCC 53774 / DSM 7210 / GS-15)</name>
    <dbReference type="NCBI Taxonomy" id="269799"/>
    <lineage>
        <taxon>Bacteria</taxon>
        <taxon>Pseudomonadati</taxon>
        <taxon>Thermodesulfobacteriota</taxon>
        <taxon>Desulfuromonadia</taxon>
        <taxon>Geobacterales</taxon>
        <taxon>Geobacteraceae</taxon>
        <taxon>Geobacter</taxon>
    </lineage>
</organism>
<reference key="1">
    <citation type="journal article" date="2009" name="BMC Microbiol.">
        <title>The genome sequence of Geobacter metallireducens: features of metabolism, physiology and regulation common and dissimilar to Geobacter sulfurreducens.</title>
        <authorList>
            <person name="Aklujkar M."/>
            <person name="Krushkal J."/>
            <person name="DiBartolo G."/>
            <person name="Lapidus A."/>
            <person name="Land M.L."/>
            <person name="Lovley D.R."/>
        </authorList>
    </citation>
    <scope>NUCLEOTIDE SEQUENCE [LARGE SCALE GENOMIC DNA]</scope>
    <source>
        <strain>ATCC 53774 / DSM 7210 / GS-15</strain>
    </source>
</reference>
<accession>Q39W62</accession>